<name>COX3_GADMO</name>
<comment type="function">
    <text evidence="2">Component of the cytochrome c oxidase, the last enzyme in the mitochondrial electron transport chain which drives oxidative phosphorylation. The respiratory chain contains 3 multisubunit complexes succinate dehydrogenase (complex II, CII), ubiquinol-cytochrome c oxidoreductase (cytochrome b-c1 complex, complex III, CIII) and cytochrome c oxidase (complex IV, CIV), that cooperate to transfer electrons derived from NADH and succinate to molecular oxygen, creating an electrochemical gradient over the inner membrane that drives transmembrane transport and the ATP synthase. Cytochrome c oxidase is the component of the respiratory chain that catalyzes the reduction of oxygen to water. Electrons originating from reduced cytochrome c in the intermembrane space (IMS) are transferred via the dinuclear copper A center (CU(A)) of subunit 2 and heme A of subunit 1 to the active site in subunit 1, a binuclear center (BNC) formed by heme A3 and copper B (CU(B)). The BNC reduces molecular oxygen to 2 water molecules using 4 electrons from cytochrome c in the IMS and 4 protons from the mitochondrial matrix.</text>
</comment>
<comment type="catalytic activity">
    <reaction evidence="2">
        <text>4 Fe(II)-[cytochrome c] + O2 + 8 H(+)(in) = 4 Fe(III)-[cytochrome c] + 2 H2O + 4 H(+)(out)</text>
        <dbReference type="Rhea" id="RHEA:11436"/>
        <dbReference type="Rhea" id="RHEA-COMP:10350"/>
        <dbReference type="Rhea" id="RHEA-COMP:14399"/>
        <dbReference type="ChEBI" id="CHEBI:15377"/>
        <dbReference type="ChEBI" id="CHEBI:15378"/>
        <dbReference type="ChEBI" id="CHEBI:15379"/>
        <dbReference type="ChEBI" id="CHEBI:29033"/>
        <dbReference type="ChEBI" id="CHEBI:29034"/>
        <dbReference type="EC" id="7.1.1.9"/>
    </reaction>
    <physiologicalReaction direction="left-to-right" evidence="2">
        <dbReference type="Rhea" id="RHEA:11437"/>
    </physiologicalReaction>
</comment>
<comment type="subunit">
    <text evidence="1">Component of the cytochrome c oxidase (complex IV, CIV), a multisubunit enzyme composed of 14 subunits. The complex is composed of a catalytic core of 3 subunits MT-CO1, MT-CO2 and MT-CO3, encoded in the mitochondrial DNA, and 11 supernumerary subunits COX4I, COX5A, COX5B, COX6A, COX6B, COX6C, COX7A, COX7B, COX7C, COX8 and NDUFA4, which are encoded in the nuclear genome. The complex exists as a monomer or a dimer and forms supercomplexes (SCs) in the inner mitochondrial membrane with NADH-ubiquinone oxidoreductase (complex I, CI) and ubiquinol-cytochrome c oxidoreductase (cytochrome b-c1 complex, complex III, CIII), resulting in different assemblies (supercomplex SCI(1)III(2)IV(1) and megacomplex MCI(2)III(2)IV(2)).</text>
</comment>
<comment type="subcellular location">
    <subcellularLocation>
        <location evidence="1">Mitochondrion inner membrane</location>
        <topology evidence="1">Multi-pass membrane protein</topology>
    </subcellularLocation>
</comment>
<comment type="similarity">
    <text evidence="3">Belongs to the cytochrome c oxidase subunit 3 family.</text>
</comment>
<gene>
    <name type="primary">mt-co3</name>
    <name type="synonym">coiii</name>
    <name type="synonym">coxiii</name>
    <name type="synonym">mtco3</name>
</gene>
<accession>P55777</accession>
<protein>
    <recommendedName>
        <fullName>Cytochrome c oxidase subunit 3</fullName>
        <ecNumber>7.1.1.9</ecNumber>
    </recommendedName>
    <alternativeName>
        <fullName>Cytochrome c oxidase polypeptide III</fullName>
    </alternativeName>
</protein>
<keyword id="KW-0472">Membrane</keyword>
<keyword id="KW-0496">Mitochondrion</keyword>
<keyword id="KW-0999">Mitochondrion inner membrane</keyword>
<keyword id="KW-1185">Reference proteome</keyword>
<keyword id="KW-1278">Translocase</keyword>
<keyword id="KW-0812">Transmembrane</keyword>
<keyword id="KW-1133">Transmembrane helix</keyword>
<reference key="1">
    <citation type="journal article" date="1996" name="Mol. Mar. Biol. Biotechnol.">
        <title>The complete mitochondrial DNA sequence of Atlantic cod (Gadus morhua): relevance to taxonomic studies among codfishes.</title>
        <authorList>
            <person name="Johansen S."/>
            <person name="Bakke I."/>
        </authorList>
    </citation>
    <scope>NUCLEOTIDE SEQUENCE [GENOMIC DNA]</scope>
    <source>
        <strain>Norwegian coastal 1</strain>
    </source>
</reference>
<evidence type="ECO:0000250" key="1">
    <source>
        <dbReference type="UniProtKB" id="P00415"/>
    </source>
</evidence>
<evidence type="ECO:0000250" key="2">
    <source>
        <dbReference type="UniProtKB" id="P00420"/>
    </source>
</evidence>
<evidence type="ECO:0000305" key="3"/>
<proteinExistence type="inferred from homology"/>
<sequence>MTHQAHAYHMVDPSPWPLTGAVAALLMTSGLAVWFHFHSTTLMALGTVLLLLTMYQWWRDIIREGTFQGHHTPPVQKGLRYGMILFITSEVFFFLGFFWAFYHASLAPTPELGGCWPPTGITTLDPFEVPLLNTAVLLASGVTVTWAHHSIMEGERKQAIHSLTLTILLGFYFTFLQGLEYYDAPFTIADGVYGSTFFVATGFHGLHVIIGSTFLAVCLLRQIRYHFTSEHHFGFEAAAWYWHFVDVVWLFLYISIYWWGS</sequence>
<dbReference type="EC" id="7.1.1.9"/>
<dbReference type="EMBL" id="X99772">
    <property type="protein sequence ID" value="CAA68112.1"/>
    <property type="molecule type" value="Genomic_DNA"/>
</dbReference>
<dbReference type="PIR" id="T11826">
    <property type="entry name" value="T11826"/>
</dbReference>
<dbReference type="SMR" id="P55777"/>
<dbReference type="CTD" id="4514"/>
<dbReference type="OrthoDB" id="10050457at2759"/>
<dbReference type="Proteomes" id="UP000694546">
    <property type="component" value="Unplaced"/>
</dbReference>
<dbReference type="GO" id="GO:0005743">
    <property type="term" value="C:mitochondrial inner membrane"/>
    <property type="evidence" value="ECO:0007669"/>
    <property type="project" value="UniProtKB-SubCell"/>
</dbReference>
<dbReference type="GO" id="GO:0045277">
    <property type="term" value="C:respiratory chain complex IV"/>
    <property type="evidence" value="ECO:0000250"/>
    <property type="project" value="UniProtKB"/>
</dbReference>
<dbReference type="GO" id="GO:0004129">
    <property type="term" value="F:cytochrome-c oxidase activity"/>
    <property type="evidence" value="ECO:0007669"/>
    <property type="project" value="UniProtKB-EC"/>
</dbReference>
<dbReference type="GO" id="GO:0006123">
    <property type="term" value="P:mitochondrial electron transport, cytochrome c to oxygen"/>
    <property type="evidence" value="ECO:0007669"/>
    <property type="project" value="TreeGrafter"/>
</dbReference>
<dbReference type="CDD" id="cd01665">
    <property type="entry name" value="Cyt_c_Oxidase_III"/>
    <property type="match status" value="1"/>
</dbReference>
<dbReference type="FunFam" id="1.10.287.70:FF:000048">
    <property type="entry name" value="Cytochrome c oxidase subunit 3"/>
    <property type="match status" value="1"/>
</dbReference>
<dbReference type="FunFam" id="1.20.120.80:FF:000002">
    <property type="entry name" value="Cytochrome c oxidase subunit 3"/>
    <property type="match status" value="1"/>
</dbReference>
<dbReference type="Gene3D" id="1.10.287.70">
    <property type="match status" value="1"/>
</dbReference>
<dbReference type="Gene3D" id="1.20.120.80">
    <property type="entry name" value="Cytochrome c oxidase, subunit III, four-helix bundle"/>
    <property type="match status" value="1"/>
</dbReference>
<dbReference type="InterPro" id="IPR024791">
    <property type="entry name" value="Cyt_c/ubiquinol_Oxase_su3"/>
</dbReference>
<dbReference type="InterPro" id="IPR033945">
    <property type="entry name" value="Cyt_c_oxase_su3_dom"/>
</dbReference>
<dbReference type="InterPro" id="IPR000298">
    <property type="entry name" value="Cyt_c_oxidase-like_su3"/>
</dbReference>
<dbReference type="InterPro" id="IPR035973">
    <property type="entry name" value="Cyt_c_oxidase_su3-like_sf"/>
</dbReference>
<dbReference type="InterPro" id="IPR013833">
    <property type="entry name" value="Cyt_c_oxidase_su3_a-hlx"/>
</dbReference>
<dbReference type="PANTHER" id="PTHR11403:SF7">
    <property type="entry name" value="CYTOCHROME C OXIDASE SUBUNIT 3"/>
    <property type="match status" value="1"/>
</dbReference>
<dbReference type="PANTHER" id="PTHR11403">
    <property type="entry name" value="CYTOCHROME C OXIDASE SUBUNIT III"/>
    <property type="match status" value="1"/>
</dbReference>
<dbReference type="Pfam" id="PF00510">
    <property type="entry name" value="COX3"/>
    <property type="match status" value="1"/>
</dbReference>
<dbReference type="SUPFAM" id="SSF81452">
    <property type="entry name" value="Cytochrome c oxidase subunit III-like"/>
    <property type="match status" value="1"/>
</dbReference>
<dbReference type="PROSITE" id="PS50253">
    <property type="entry name" value="COX3"/>
    <property type="match status" value="1"/>
</dbReference>
<geneLocation type="mitochondrion"/>
<feature type="chain" id="PRO_0000183774" description="Cytochrome c oxidase subunit 3">
    <location>
        <begin position="1"/>
        <end position="261"/>
    </location>
</feature>
<feature type="topological domain" description="Mitochondrial matrix" evidence="1">
    <location>
        <begin position="1"/>
        <end position="15"/>
    </location>
</feature>
<feature type="transmembrane region" description="Helical; Name=I" evidence="1">
    <location>
        <begin position="16"/>
        <end position="34"/>
    </location>
</feature>
<feature type="topological domain" description="Mitochondrial intermembrane" evidence="1">
    <location>
        <begin position="35"/>
        <end position="40"/>
    </location>
</feature>
<feature type="transmembrane region" description="Helical; Name=II" evidence="1">
    <location>
        <begin position="41"/>
        <end position="66"/>
    </location>
</feature>
<feature type="topological domain" description="Mitochondrial matrix" evidence="1">
    <location>
        <begin position="67"/>
        <end position="72"/>
    </location>
</feature>
<feature type="transmembrane region" description="Helical; Name=III" evidence="1">
    <location>
        <begin position="73"/>
        <end position="105"/>
    </location>
</feature>
<feature type="topological domain" description="Mitochondrial intermembrane" evidence="1">
    <location>
        <begin position="106"/>
        <end position="128"/>
    </location>
</feature>
<feature type="transmembrane region" description="Helical; Name=IV" evidence="1">
    <location>
        <begin position="129"/>
        <end position="152"/>
    </location>
</feature>
<feature type="topological domain" description="Mitochondrial matrix" evidence="1">
    <location>
        <begin position="153"/>
        <end position="155"/>
    </location>
</feature>
<feature type="transmembrane region" description="Helical; Name=V" evidence="1">
    <location>
        <begin position="156"/>
        <end position="183"/>
    </location>
</feature>
<feature type="topological domain" description="Mitochondrial intermembrane" evidence="1">
    <location>
        <begin position="184"/>
        <end position="190"/>
    </location>
</feature>
<feature type="transmembrane region" description="Helical; Name=VI" evidence="1">
    <location>
        <begin position="191"/>
        <end position="223"/>
    </location>
</feature>
<feature type="topological domain" description="Mitochondrial matrix" evidence="1">
    <location>
        <begin position="224"/>
        <end position="232"/>
    </location>
</feature>
<feature type="transmembrane region" description="Helical; Name=VII" evidence="1">
    <location>
        <begin position="233"/>
        <end position="256"/>
    </location>
</feature>
<feature type="topological domain" description="Mitochondrial intermembrane" evidence="1">
    <location>
        <begin position="257"/>
        <end position="261"/>
    </location>
</feature>
<organism>
    <name type="scientific">Gadus morhua</name>
    <name type="common">Atlantic cod</name>
    <dbReference type="NCBI Taxonomy" id="8049"/>
    <lineage>
        <taxon>Eukaryota</taxon>
        <taxon>Metazoa</taxon>
        <taxon>Chordata</taxon>
        <taxon>Craniata</taxon>
        <taxon>Vertebrata</taxon>
        <taxon>Euteleostomi</taxon>
        <taxon>Actinopterygii</taxon>
        <taxon>Neopterygii</taxon>
        <taxon>Teleostei</taxon>
        <taxon>Neoteleostei</taxon>
        <taxon>Acanthomorphata</taxon>
        <taxon>Zeiogadaria</taxon>
        <taxon>Gadariae</taxon>
        <taxon>Gadiformes</taxon>
        <taxon>Gadoidei</taxon>
        <taxon>Gadidae</taxon>
        <taxon>Gadus</taxon>
    </lineage>
</organism>